<feature type="signal peptide" evidence="2">
    <location>
        <begin position="1"/>
        <end position="29"/>
    </location>
</feature>
<feature type="chain" id="PRO_0000286116" description="Putative phospholipase B-like lamina ancestor">
    <location>
        <begin position="30"/>
        <end position="658"/>
    </location>
</feature>
<feature type="glycosylation site" description="N-linked (GlcNAc...) asparagine" evidence="2">
    <location>
        <position position="229"/>
    </location>
</feature>
<feature type="glycosylation site" description="N-linked (GlcNAc...) asparagine" evidence="2">
    <location>
        <position position="465"/>
    </location>
</feature>
<feature type="glycosylation site" description="N-linked (GlcNAc...) asparagine" evidence="2">
    <location>
        <position position="486"/>
    </location>
</feature>
<feature type="sequence conflict" description="In Ref. 4; AAN71230." evidence="5" ref="4">
    <original>K</original>
    <variation>N</variation>
    <location>
        <position position="425"/>
    </location>
</feature>
<accession>Q9VRK8</accession>
<accession>A4V1I2</accession>
<accession>Q8IH16</accession>
<accession>Q94898</accession>
<sequence>MLKVVGASWQKTRIGTYILIGAGLLVIGAFFIGYMERPEYDGTYCATALWTKQVGFQIENWKQQNDLVNIPTGVGRICYKDSVYENGWAQIEVETQRTYPDWVQAYAAGMLEGSLTWRNIYNQWSNTISSSCERDESTQKFCGWLRDLLTTNYHRLKRQTEKAENDHYWHQLHLFITQLEGLETGYKRGASRARSDLEEEIPFSDFLLMNAAADIQDLKIYYENYELQNSTEHTEEPGTDQPKNFFLPSATMLTKIVQEEESPQVLQLLFGHSTAGSYSSMLRIQKRYKFHYHFSSKLRSNTVPGVDITFTGYPGILGSTDDFYTIKGRHLHAIVGGVGIKNENLQLWKTVDPKKMVPLVARVMAANRISQNRQTWASAMSRHPFTGAKQWITVDLNKMKVQDNLYNVLEGDDKHDDAPVVLNEKDRTAIQQRHDQLRDMVWIAEQLPGMMTKKDVTQGFLVPGNTSWLANGVPYFKNVLELSGVNYSEDQQLTVADEEELTSLASVDKYLRTHGFRGDLLGSQESIAYGNIDLKLFSYNARLGISDFHAFAGPVFLRFQHTQPRTLEDEGQDGGVPPAASMGDERLSVSIEDADSLAEMELITERRSVRNDMRAIAMRKIGSGPFKWSEMSPVEEGGGHEGHPDEWNFDKVSPKWAW</sequence>
<proteinExistence type="evidence at transcript level"/>
<reference key="1">
    <citation type="journal article" date="1996" name="Mech. Dev.">
        <title>Molecular and genetic analyses of lama, an evolutionarily conserved gene expressed in the precursors of the Drosophila first optic ganglion.</title>
        <authorList>
            <person name="Perez S.E."/>
            <person name="Steller H."/>
        </authorList>
    </citation>
    <scope>NUCLEOTIDE SEQUENCE [MRNA]</scope>
    <scope>TISSUE SPECIFICITY</scope>
    <source>
        <tissue>Embryo</tissue>
    </source>
</reference>
<reference key="2">
    <citation type="journal article" date="2000" name="Science">
        <title>The genome sequence of Drosophila melanogaster.</title>
        <authorList>
            <person name="Adams M.D."/>
            <person name="Celniker S.E."/>
            <person name="Holt R.A."/>
            <person name="Evans C.A."/>
            <person name="Gocayne J.D."/>
            <person name="Amanatides P.G."/>
            <person name="Scherer S.E."/>
            <person name="Li P.W."/>
            <person name="Hoskins R.A."/>
            <person name="Galle R.F."/>
            <person name="George R.A."/>
            <person name="Lewis S.E."/>
            <person name="Richards S."/>
            <person name="Ashburner M."/>
            <person name="Henderson S.N."/>
            <person name="Sutton G.G."/>
            <person name="Wortman J.R."/>
            <person name="Yandell M.D."/>
            <person name="Zhang Q."/>
            <person name="Chen L.X."/>
            <person name="Brandon R.C."/>
            <person name="Rogers Y.-H.C."/>
            <person name="Blazej R.G."/>
            <person name="Champe M."/>
            <person name="Pfeiffer B.D."/>
            <person name="Wan K.H."/>
            <person name="Doyle C."/>
            <person name="Baxter E.G."/>
            <person name="Helt G."/>
            <person name="Nelson C.R."/>
            <person name="Miklos G.L.G."/>
            <person name="Abril J.F."/>
            <person name="Agbayani A."/>
            <person name="An H.-J."/>
            <person name="Andrews-Pfannkoch C."/>
            <person name="Baldwin D."/>
            <person name="Ballew R.M."/>
            <person name="Basu A."/>
            <person name="Baxendale J."/>
            <person name="Bayraktaroglu L."/>
            <person name="Beasley E.M."/>
            <person name="Beeson K.Y."/>
            <person name="Benos P.V."/>
            <person name="Berman B.P."/>
            <person name="Bhandari D."/>
            <person name="Bolshakov S."/>
            <person name="Borkova D."/>
            <person name="Botchan M.R."/>
            <person name="Bouck J."/>
            <person name="Brokstein P."/>
            <person name="Brottier P."/>
            <person name="Burtis K.C."/>
            <person name="Busam D.A."/>
            <person name="Butler H."/>
            <person name="Cadieu E."/>
            <person name="Center A."/>
            <person name="Chandra I."/>
            <person name="Cherry J.M."/>
            <person name="Cawley S."/>
            <person name="Dahlke C."/>
            <person name="Davenport L.B."/>
            <person name="Davies P."/>
            <person name="de Pablos B."/>
            <person name="Delcher A."/>
            <person name="Deng Z."/>
            <person name="Mays A.D."/>
            <person name="Dew I."/>
            <person name="Dietz S.M."/>
            <person name="Dodson K."/>
            <person name="Doup L.E."/>
            <person name="Downes M."/>
            <person name="Dugan-Rocha S."/>
            <person name="Dunkov B.C."/>
            <person name="Dunn P."/>
            <person name="Durbin K.J."/>
            <person name="Evangelista C.C."/>
            <person name="Ferraz C."/>
            <person name="Ferriera S."/>
            <person name="Fleischmann W."/>
            <person name="Fosler C."/>
            <person name="Gabrielian A.E."/>
            <person name="Garg N.S."/>
            <person name="Gelbart W.M."/>
            <person name="Glasser K."/>
            <person name="Glodek A."/>
            <person name="Gong F."/>
            <person name="Gorrell J.H."/>
            <person name="Gu Z."/>
            <person name="Guan P."/>
            <person name="Harris M."/>
            <person name="Harris N.L."/>
            <person name="Harvey D.A."/>
            <person name="Heiman T.J."/>
            <person name="Hernandez J.R."/>
            <person name="Houck J."/>
            <person name="Hostin D."/>
            <person name="Houston K.A."/>
            <person name="Howland T.J."/>
            <person name="Wei M.-H."/>
            <person name="Ibegwam C."/>
            <person name="Jalali M."/>
            <person name="Kalush F."/>
            <person name="Karpen G.H."/>
            <person name="Ke Z."/>
            <person name="Kennison J.A."/>
            <person name="Ketchum K.A."/>
            <person name="Kimmel B.E."/>
            <person name="Kodira C.D."/>
            <person name="Kraft C.L."/>
            <person name="Kravitz S."/>
            <person name="Kulp D."/>
            <person name="Lai Z."/>
            <person name="Lasko P."/>
            <person name="Lei Y."/>
            <person name="Levitsky A.A."/>
            <person name="Li J.H."/>
            <person name="Li Z."/>
            <person name="Liang Y."/>
            <person name="Lin X."/>
            <person name="Liu X."/>
            <person name="Mattei B."/>
            <person name="McIntosh T.C."/>
            <person name="McLeod M.P."/>
            <person name="McPherson D."/>
            <person name="Merkulov G."/>
            <person name="Milshina N.V."/>
            <person name="Mobarry C."/>
            <person name="Morris J."/>
            <person name="Moshrefi A."/>
            <person name="Mount S.M."/>
            <person name="Moy M."/>
            <person name="Murphy B."/>
            <person name="Murphy L."/>
            <person name="Muzny D.M."/>
            <person name="Nelson D.L."/>
            <person name="Nelson D.R."/>
            <person name="Nelson K.A."/>
            <person name="Nixon K."/>
            <person name="Nusskern D.R."/>
            <person name="Pacleb J.M."/>
            <person name="Palazzolo M."/>
            <person name="Pittman G.S."/>
            <person name="Pan S."/>
            <person name="Pollard J."/>
            <person name="Puri V."/>
            <person name="Reese M.G."/>
            <person name="Reinert K."/>
            <person name="Remington K."/>
            <person name="Saunders R.D.C."/>
            <person name="Scheeler F."/>
            <person name="Shen H."/>
            <person name="Shue B.C."/>
            <person name="Siden-Kiamos I."/>
            <person name="Simpson M."/>
            <person name="Skupski M.P."/>
            <person name="Smith T.J."/>
            <person name="Spier E."/>
            <person name="Spradling A.C."/>
            <person name="Stapleton M."/>
            <person name="Strong R."/>
            <person name="Sun E."/>
            <person name="Svirskas R."/>
            <person name="Tector C."/>
            <person name="Turner R."/>
            <person name="Venter E."/>
            <person name="Wang A.H."/>
            <person name="Wang X."/>
            <person name="Wang Z.-Y."/>
            <person name="Wassarman D.A."/>
            <person name="Weinstock G.M."/>
            <person name="Weissenbach J."/>
            <person name="Williams S.M."/>
            <person name="Woodage T."/>
            <person name="Worley K.C."/>
            <person name="Wu D."/>
            <person name="Yang S."/>
            <person name="Yao Q.A."/>
            <person name="Ye J."/>
            <person name="Yeh R.-F."/>
            <person name="Zaveri J.S."/>
            <person name="Zhan M."/>
            <person name="Zhang G."/>
            <person name="Zhao Q."/>
            <person name="Zheng L."/>
            <person name="Zheng X.H."/>
            <person name="Zhong F.N."/>
            <person name="Zhong W."/>
            <person name="Zhou X."/>
            <person name="Zhu S.C."/>
            <person name="Zhu X."/>
            <person name="Smith H.O."/>
            <person name="Gibbs R.A."/>
            <person name="Myers E.W."/>
            <person name="Rubin G.M."/>
            <person name="Venter J.C."/>
        </authorList>
    </citation>
    <scope>NUCLEOTIDE SEQUENCE [LARGE SCALE GENOMIC DNA]</scope>
    <source>
        <strain>Berkeley</strain>
    </source>
</reference>
<reference key="3">
    <citation type="journal article" date="2002" name="Genome Biol.">
        <title>Annotation of the Drosophila melanogaster euchromatic genome: a systematic review.</title>
        <authorList>
            <person name="Misra S."/>
            <person name="Crosby M.A."/>
            <person name="Mungall C.J."/>
            <person name="Matthews B.B."/>
            <person name="Campbell K.S."/>
            <person name="Hradecky P."/>
            <person name="Huang Y."/>
            <person name="Kaminker J.S."/>
            <person name="Millburn G.H."/>
            <person name="Prochnik S.E."/>
            <person name="Smith C.D."/>
            <person name="Tupy J.L."/>
            <person name="Whitfield E.J."/>
            <person name="Bayraktaroglu L."/>
            <person name="Berman B.P."/>
            <person name="Bettencourt B.R."/>
            <person name="Celniker S.E."/>
            <person name="de Grey A.D.N.J."/>
            <person name="Drysdale R.A."/>
            <person name="Harris N.L."/>
            <person name="Richter J."/>
            <person name="Russo S."/>
            <person name="Schroeder A.J."/>
            <person name="Shu S.Q."/>
            <person name="Stapleton M."/>
            <person name="Yamada C."/>
            <person name="Ashburner M."/>
            <person name="Gelbart W.M."/>
            <person name="Rubin G.M."/>
            <person name="Lewis S.E."/>
        </authorList>
    </citation>
    <scope>GENOME REANNOTATION</scope>
    <source>
        <strain>Berkeley</strain>
    </source>
</reference>
<reference key="4">
    <citation type="journal article" date="2002" name="Genome Biol.">
        <title>A Drosophila full-length cDNA resource.</title>
        <authorList>
            <person name="Stapleton M."/>
            <person name="Carlson J.W."/>
            <person name="Brokstein P."/>
            <person name="Yu C."/>
            <person name="Champe M."/>
            <person name="George R.A."/>
            <person name="Guarin H."/>
            <person name="Kronmiller B."/>
            <person name="Pacleb J.M."/>
            <person name="Park S."/>
            <person name="Wan K.H."/>
            <person name="Rubin G.M."/>
            <person name="Celniker S.E."/>
        </authorList>
    </citation>
    <scope>NUCLEOTIDE SEQUENCE [LARGE SCALE MRNA]</scope>
    <source>
        <strain>Berkeley</strain>
        <tissue>Embryo</tissue>
    </source>
</reference>
<reference key="5">
    <citation type="journal article" date="2005" name="Development">
        <title>Regulation of cellular plasticity in Drosophila imaginal disc cells by the Polycomb group, trithorax group and lama genes.</title>
        <authorList>
            <person name="Klebes A."/>
            <person name="Sustar A."/>
            <person name="Kechris K."/>
            <person name="Li H."/>
            <person name="Schubiger G."/>
            <person name="Kornberg T.B."/>
        </authorList>
    </citation>
    <scope>FUNCTION</scope>
    <scope>TISSUE SPECIFICITY</scope>
</reference>
<reference key="6">
    <citation type="journal article" date="2005" name="Development">
        <authorList>
            <person name="Klebes A."/>
            <person name="Sustar A."/>
            <person name="Kechris K."/>
            <person name="Li H."/>
            <person name="Schubiger G."/>
            <person name="Kornberg T.B."/>
        </authorList>
    </citation>
    <scope>ERRATUM OF PUBMED:16077094</scope>
</reference>
<name>PLBL_DROME</name>
<keyword id="KW-0325">Glycoprotein</keyword>
<keyword id="KW-0378">Hydrolase</keyword>
<keyword id="KW-0442">Lipid degradation</keyword>
<keyword id="KW-0443">Lipid metabolism</keyword>
<keyword id="KW-1185">Reference proteome</keyword>
<keyword id="KW-0964">Secreted</keyword>
<keyword id="KW-0732">Signal</keyword>
<dbReference type="EC" id="3.1.1.-"/>
<dbReference type="EMBL" id="U57314">
    <property type="protein sequence ID" value="AAB49926.1"/>
    <property type="status" value="ALT_FRAME"/>
    <property type="molecule type" value="mRNA"/>
</dbReference>
<dbReference type="EMBL" id="AE014296">
    <property type="protein sequence ID" value="AAF50787.3"/>
    <property type="molecule type" value="Genomic_DNA"/>
</dbReference>
<dbReference type="EMBL" id="AE014296">
    <property type="protein sequence ID" value="AAG22333.2"/>
    <property type="molecule type" value="Genomic_DNA"/>
</dbReference>
<dbReference type="EMBL" id="AE014296">
    <property type="protein sequence ID" value="AAN12118.2"/>
    <property type="molecule type" value="Genomic_DNA"/>
</dbReference>
<dbReference type="EMBL" id="BT001475">
    <property type="protein sequence ID" value="AAN71230.1"/>
    <property type="molecule type" value="mRNA"/>
</dbReference>
<dbReference type="RefSeq" id="NP_001261440.1">
    <property type="nucleotide sequence ID" value="NM_001274511.1"/>
</dbReference>
<dbReference type="RefSeq" id="NP_523933.3">
    <property type="nucleotide sequence ID" value="NM_079209.3"/>
</dbReference>
<dbReference type="RefSeq" id="NP_729059.2">
    <property type="nucleotide sequence ID" value="NM_168115.2"/>
</dbReference>
<dbReference type="RefSeq" id="NP_729060.2">
    <property type="nucleotide sequence ID" value="NM_168116.2"/>
</dbReference>
<dbReference type="SMR" id="Q9VRK8"/>
<dbReference type="BioGRID" id="64076">
    <property type="interactions" value="4"/>
</dbReference>
<dbReference type="FunCoup" id="Q9VRK8">
    <property type="interactions" value="54"/>
</dbReference>
<dbReference type="IntAct" id="Q9VRK8">
    <property type="interactions" value="2"/>
</dbReference>
<dbReference type="STRING" id="7227.FBpp0305772"/>
<dbReference type="GlyCosmos" id="Q9VRK8">
    <property type="glycosylation" value="3 sites, No reported glycans"/>
</dbReference>
<dbReference type="GlyGen" id="Q9VRK8">
    <property type="glycosylation" value="3 sites"/>
</dbReference>
<dbReference type="PaxDb" id="7227-FBpp0076862"/>
<dbReference type="EnsemblMetazoa" id="FBtr0077159">
    <property type="protein sequence ID" value="FBpp0076862"/>
    <property type="gene ID" value="FBgn0016031"/>
</dbReference>
<dbReference type="EnsemblMetazoa" id="FBtr0077160">
    <property type="protein sequence ID" value="FBpp0076863"/>
    <property type="gene ID" value="FBgn0016031"/>
</dbReference>
<dbReference type="EnsemblMetazoa" id="FBtr0077161">
    <property type="protein sequence ID" value="FBpp0076864"/>
    <property type="gene ID" value="FBgn0016031"/>
</dbReference>
<dbReference type="EnsemblMetazoa" id="FBtr0333595">
    <property type="protein sequence ID" value="FBpp0305772"/>
    <property type="gene ID" value="FBgn0016031"/>
</dbReference>
<dbReference type="GeneID" id="38610"/>
<dbReference type="KEGG" id="dme:Dmel_CG10645"/>
<dbReference type="AGR" id="FB:FBgn0016031"/>
<dbReference type="CTD" id="38610"/>
<dbReference type="FlyBase" id="FBgn0016031">
    <property type="gene designation" value="lama"/>
</dbReference>
<dbReference type="VEuPathDB" id="VectorBase:FBgn0016031"/>
<dbReference type="eggNOG" id="KOG3774">
    <property type="taxonomic scope" value="Eukaryota"/>
</dbReference>
<dbReference type="GeneTree" id="ENSGT00530000063509"/>
<dbReference type="HOGENOM" id="CLU_027106_2_0_1"/>
<dbReference type="InParanoid" id="Q9VRK8"/>
<dbReference type="OMA" id="RPVRNDM"/>
<dbReference type="OrthoDB" id="419508at2759"/>
<dbReference type="PhylomeDB" id="Q9VRK8"/>
<dbReference type="BioGRID-ORCS" id="38610">
    <property type="hits" value="0 hits in 3 CRISPR screens"/>
</dbReference>
<dbReference type="ChiTaRS" id="LanA">
    <property type="organism name" value="fly"/>
</dbReference>
<dbReference type="GenomeRNAi" id="38610"/>
<dbReference type="PRO" id="PR:Q9VRK8"/>
<dbReference type="Proteomes" id="UP000000803">
    <property type="component" value="Chromosome 3L"/>
</dbReference>
<dbReference type="Bgee" id="FBgn0016031">
    <property type="expression patterns" value="Expressed in adult Malpighian tubule principal cell of initial segment in Malpighian tubule and 182 other cell types or tissues"/>
</dbReference>
<dbReference type="ExpressionAtlas" id="Q9VRK8">
    <property type="expression patterns" value="baseline and differential"/>
</dbReference>
<dbReference type="GO" id="GO:0005576">
    <property type="term" value="C:extracellular region"/>
    <property type="evidence" value="ECO:0000314"/>
    <property type="project" value="UniProtKB"/>
</dbReference>
<dbReference type="GO" id="GO:0004620">
    <property type="term" value="F:phospholipase activity"/>
    <property type="evidence" value="ECO:0000250"/>
    <property type="project" value="FlyBase"/>
</dbReference>
<dbReference type="GO" id="GO:0046843">
    <property type="term" value="P:dorsal appendage formation"/>
    <property type="evidence" value="ECO:0000315"/>
    <property type="project" value="FlyBase"/>
</dbReference>
<dbReference type="GO" id="GO:0007444">
    <property type="term" value="P:imaginal disc development"/>
    <property type="evidence" value="ECO:0000315"/>
    <property type="project" value="UniProtKB"/>
</dbReference>
<dbReference type="GO" id="GO:0009395">
    <property type="term" value="P:phospholipid catabolic process"/>
    <property type="evidence" value="ECO:0000250"/>
    <property type="project" value="FlyBase"/>
</dbReference>
<dbReference type="Gene3D" id="3.60.60.30">
    <property type="match status" value="1"/>
</dbReference>
<dbReference type="InterPro" id="IPR007000">
    <property type="entry name" value="PLipase_B-like"/>
</dbReference>
<dbReference type="PANTHER" id="PTHR12370:SF3">
    <property type="entry name" value="PHOSPHOLIPASE B-LIKE 2-RELATED"/>
    <property type="match status" value="1"/>
</dbReference>
<dbReference type="PANTHER" id="PTHR12370">
    <property type="entry name" value="PHOSPHOLIPASE B-RELATED"/>
    <property type="match status" value="1"/>
</dbReference>
<dbReference type="Pfam" id="PF04916">
    <property type="entry name" value="Phospholip_B"/>
    <property type="match status" value="1"/>
</dbReference>
<protein>
    <recommendedName>
        <fullName>Putative phospholipase B-like lamina ancestor</fullName>
        <ecNumber>3.1.1.-</ecNumber>
    </recommendedName>
</protein>
<organism>
    <name type="scientific">Drosophila melanogaster</name>
    <name type="common">Fruit fly</name>
    <dbReference type="NCBI Taxonomy" id="7227"/>
    <lineage>
        <taxon>Eukaryota</taxon>
        <taxon>Metazoa</taxon>
        <taxon>Ecdysozoa</taxon>
        <taxon>Arthropoda</taxon>
        <taxon>Hexapoda</taxon>
        <taxon>Insecta</taxon>
        <taxon>Pterygota</taxon>
        <taxon>Neoptera</taxon>
        <taxon>Endopterygota</taxon>
        <taxon>Diptera</taxon>
        <taxon>Brachycera</taxon>
        <taxon>Muscomorpha</taxon>
        <taxon>Ephydroidea</taxon>
        <taxon>Drosophilidae</taxon>
        <taxon>Drosophila</taxon>
        <taxon>Sophophora</taxon>
    </lineage>
</organism>
<comment type="function">
    <text evidence="1 3">Putative phospholipase (By similarity). Involved in the regulation of cellular plasticity in imaginal disks.</text>
</comment>
<comment type="subcellular location">
    <subcellularLocation>
        <location evidence="5">Secreted</location>
    </subcellularLocation>
</comment>
<comment type="tissue specificity">
    <text evidence="3 4">Expressed in neural and glial progenitors prior to, but not after, differentiation. Not expressed in late third instar disks, but is expressed uniformly by early third instar disks, in the imaginal ring of the proventriculus and in the salivary gland.</text>
</comment>
<comment type="similarity">
    <text evidence="5">Belongs to the phospholipase B-like family.</text>
</comment>
<comment type="sequence caution" evidence="5">
    <conflict type="frameshift">
        <sequence resource="EMBL-CDS" id="AAB49926"/>
    </conflict>
</comment>
<evidence type="ECO:0000250" key="1"/>
<evidence type="ECO:0000255" key="2"/>
<evidence type="ECO:0000269" key="3">
    <source>
    </source>
</evidence>
<evidence type="ECO:0000269" key="4">
    <source>
    </source>
</evidence>
<evidence type="ECO:0000305" key="5"/>
<gene>
    <name type="primary">lama</name>
    <name type="ORF">CG10645</name>
</gene>